<accession>Q2GC97</accession>
<feature type="chain" id="PRO_1000085366" description="tRNA(Ile)-lysidine synthase">
    <location>
        <begin position="1"/>
        <end position="326"/>
    </location>
</feature>
<feature type="binding site" evidence="1">
    <location>
        <begin position="33"/>
        <end position="38"/>
    </location>
    <ligand>
        <name>ATP</name>
        <dbReference type="ChEBI" id="CHEBI:30616"/>
    </ligand>
</feature>
<protein>
    <recommendedName>
        <fullName evidence="1">tRNA(Ile)-lysidine synthase</fullName>
        <ecNumber evidence="1">6.3.4.19</ecNumber>
    </recommendedName>
    <alternativeName>
        <fullName evidence="1">tRNA(Ile)-2-lysyl-cytidine synthase</fullName>
    </alternativeName>
    <alternativeName>
        <fullName evidence="1">tRNA(Ile)-lysidine synthetase</fullName>
    </alternativeName>
</protein>
<dbReference type="EC" id="6.3.4.19" evidence="1"/>
<dbReference type="EMBL" id="CP000248">
    <property type="protein sequence ID" value="ABD24526.1"/>
    <property type="molecule type" value="Genomic_DNA"/>
</dbReference>
<dbReference type="RefSeq" id="WP_011443740.1">
    <property type="nucleotide sequence ID" value="NC_007794.1"/>
</dbReference>
<dbReference type="SMR" id="Q2GC97"/>
<dbReference type="STRING" id="279238.Saro_0077"/>
<dbReference type="KEGG" id="nar:Saro_0077"/>
<dbReference type="eggNOG" id="COG0037">
    <property type="taxonomic scope" value="Bacteria"/>
</dbReference>
<dbReference type="HOGENOM" id="CLU_018869_3_0_5"/>
<dbReference type="Proteomes" id="UP000009134">
    <property type="component" value="Chromosome"/>
</dbReference>
<dbReference type="GO" id="GO:0005737">
    <property type="term" value="C:cytoplasm"/>
    <property type="evidence" value="ECO:0007669"/>
    <property type="project" value="UniProtKB-SubCell"/>
</dbReference>
<dbReference type="GO" id="GO:0005524">
    <property type="term" value="F:ATP binding"/>
    <property type="evidence" value="ECO:0007669"/>
    <property type="project" value="UniProtKB-UniRule"/>
</dbReference>
<dbReference type="GO" id="GO:0032267">
    <property type="term" value="F:tRNA(Ile)-lysidine synthase activity"/>
    <property type="evidence" value="ECO:0007669"/>
    <property type="project" value="UniProtKB-EC"/>
</dbReference>
<dbReference type="GO" id="GO:0006400">
    <property type="term" value="P:tRNA modification"/>
    <property type="evidence" value="ECO:0007669"/>
    <property type="project" value="UniProtKB-UniRule"/>
</dbReference>
<dbReference type="CDD" id="cd01992">
    <property type="entry name" value="TilS_N"/>
    <property type="match status" value="1"/>
</dbReference>
<dbReference type="Gene3D" id="3.40.50.620">
    <property type="entry name" value="HUPs"/>
    <property type="match status" value="1"/>
</dbReference>
<dbReference type="HAMAP" id="MF_01161">
    <property type="entry name" value="tRNA_Ile_lys_synt"/>
    <property type="match status" value="1"/>
</dbReference>
<dbReference type="InterPro" id="IPR014729">
    <property type="entry name" value="Rossmann-like_a/b/a_fold"/>
</dbReference>
<dbReference type="InterPro" id="IPR011063">
    <property type="entry name" value="TilS/TtcA_N"/>
</dbReference>
<dbReference type="InterPro" id="IPR012094">
    <property type="entry name" value="tRNA_Ile_lys_synt"/>
</dbReference>
<dbReference type="InterPro" id="IPR012795">
    <property type="entry name" value="tRNA_Ile_lys_synt_N"/>
</dbReference>
<dbReference type="NCBIfam" id="TIGR02432">
    <property type="entry name" value="lysidine_TilS_N"/>
    <property type="match status" value="1"/>
</dbReference>
<dbReference type="PANTHER" id="PTHR43033">
    <property type="entry name" value="TRNA(ILE)-LYSIDINE SYNTHASE-RELATED"/>
    <property type="match status" value="1"/>
</dbReference>
<dbReference type="PANTHER" id="PTHR43033:SF5">
    <property type="entry name" value="TRNA(ILE)-LYSIDINE SYNTHETASE"/>
    <property type="match status" value="1"/>
</dbReference>
<dbReference type="Pfam" id="PF01171">
    <property type="entry name" value="ATP_bind_3"/>
    <property type="match status" value="1"/>
</dbReference>
<dbReference type="SUPFAM" id="SSF52402">
    <property type="entry name" value="Adenine nucleotide alpha hydrolases-like"/>
    <property type="match status" value="1"/>
</dbReference>
<organism>
    <name type="scientific">Novosphingobium aromaticivorans (strain ATCC 700278 / DSM 12444 / CCUG 56034 / CIP 105152 / NBRC 16084 / F199)</name>
    <dbReference type="NCBI Taxonomy" id="279238"/>
    <lineage>
        <taxon>Bacteria</taxon>
        <taxon>Pseudomonadati</taxon>
        <taxon>Pseudomonadota</taxon>
        <taxon>Alphaproteobacteria</taxon>
        <taxon>Sphingomonadales</taxon>
        <taxon>Sphingomonadaceae</taxon>
        <taxon>Novosphingobium</taxon>
    </lineage>
</organism>
<keyword id="KW-0067">ATP-binding</keyword>
<keyword id="KW-0963">Cytoplasm</keyword>
<keyword id="KW-0436">Ligase</keyword>
<keyword id="KW-0547">Nucleotide-binding</keyword>
<keyword id="KW-1185">Reference proteome</keyword>
<keyword id="KW-0819">tRNA processing</keyword>
<comment type="function">
    <text evidence="1">Ligates lysine onto the cytidine present at position 34 of the AUA codon-specific tRNA(Ile) that contains the anticodon CAU, in an ATP-dependent manner. Cytidine is converted to lysidine, thus changing the amino acid specificity of the tRNA from methionine to isoleucine.</text>
</comment>
<comment type="catalytic activity">
    <reaction evidence="1">
        <text>cytidine(34) in tRNA(Ile2) + L-lysine + ATP = lysidine(34) in tRNA(Ile2) + AMP + diphosphate + H(+)</text>
        <dbReference type="Rhea" id="RHEA:43744"/>
        <dbReference type="Rhea" id="RHEA-COMP:10625"/>
        <dbReference type="Rhea" id="RHEA-COMP:10670"/>
        <dbReference type="ChEBI" id="CHEBI:15378"/>
        <dbReference type="ChEBI" id="CHEBI:30616"/>
        <dbReference type="ChEBI" id="CHEBI:32551"/>
        <dbReference type="ChEBI" id="CHEBI:33019"/>
        <dbReference type="ChEBI" id="CHEBI:82748"/>
        <dbReference type="ChEBI" id="CHEBI:83665"/>
        <dbReference type="ChEBI" id="CHEBI:456215"/>
        <dbReference type="EC" id="6.3.4.19"/>
    </reaction>
</comment>
<comment type="subcellular location">
    <subcellularLocation>
        <location evidence="1">Cytoplasm</location>
    </subcellularLocation>
</comment>
<comment type="domain">
    <text>The N-terminal region contains the highly conserved SGGXDS motif, predicted to be a P-loop motif involved in ATP binding.</text>
</comment>
<comment type="similarity">
    <text evidence="1">Belongs to the tRNA(Ile)-lysidine synthase family.</text>
</comment>
<reference key="1">
    <citation type="submission" date="2006-01" db="EMBL/GenBank/DDBJ databases">
        <title>Complete sequence of Novosphingobium aromaticivorans DSM 12444.</title>
        <authorList>
            <consortium name="US DOE Joint Genome Institute"/>
            <person name="Copeland A."/>
            <person name="Lucas S."/>
            <person name="Lapidus A."/>
            <person name="Barry K."/>
            <person name="Detter J.C."/>
            <person name="Glavina T."/>
            <person name="Hammon N."/>
            <person name="Israni S."/>
            <person name="Pitluck S."/>
            <person name="Chain P."/>
            <person name="Malfatti S."/>
            <person name="Shin M."/>
            <person name="Vergez L."/>
            <person name="Schmutz J."/>
            <person name="Larimer F."/>
            <person name="Land M."/>
            <person name="Kyrpides N."/>
            <person name="Ivanova N."/>
            <person name="Fredrickson J."/>
            <person name="Balkwill D."/>
            <person name="Romine M.F."/>
            <person name="Richardson P."/>
        </authorList>
    </citation>
    <scope>NUCLEOTIDE SEQUENCE [LARGE SCALE GENOMIC DNA]</scope>
    <source>
        <strain>ATCC 700278 / DSM 12444 / CCUG 56034 / CIP 105152 / NBRC 16084 / F199</strain>
    </source>
</reference>
<proteinExistence type="inferred from homology"/>
<name>TILS_NOVAD</name>
<sequence length="326" mass="34758">MGEGGESLSGAASRFRADWQALDPSGRVCLAVSGGPDSLALMLLMQEVAPRDFCVATVDHGLRAESAAEAAMVAGLCEMRGIAYHTLRLDLAGGSAVQERARKARYAALADLARRDGLSAVVTAHHADDQAETLVMRLNRGAGLRGLAGMRAASSVPGAGEVRLLRPLLGWRRAELVALVEDAGLAPVLDPSNHDHRYERVRIRDVMASTKALLPSGFAASASHLAEADAALEWAVERLWLDIGMSAEGSTWNPPEDLPRVLALRLLERVVMHLGGTVPRGPDLVRWLATLRAGGVATLAGVKGDARSGAWRFSRAPEHRSDRRPD</sequence>
<evidence type="ECO:0000255" key="1">
    <source>
        <dbReference type="HAMAP-Rule" id="MF_01161"/>
    </source>
</evidence>
<gene>
    <name evidence="1" type="primary">tilS</name>
    <name type="ordered locus">Saro_0077</name>
</gene>